<dbReference type="EMBL" id="BX640435">
    <property type="protein sequence ID" value="CAE39166.1"/>
    <property type="molecule type" value="Genomic_DNA"/>
</dbReference>
<dbReference type="RefSeq" id="WP_010929293.1">
    <property type="nucleotide sequence ID" value="NC_002928.3"/>
</dbReference>
<dbReference type="SMR" id="Q7W3Z2"/>
<dbReference type="GeneID" id="93205683"/>
<dbReference type="KEGG" id="bpa:BPP3883"/>
<dbReference type="HOGENOM" id="CLU_046483_2_1_4"/>
<dbReference type="Proteomes" id="UP000001421">
    <property type="component" value="Chromosome"/>
</dbReference>
<dbReference type="GO" id="GO:0022627">
    <property type="term" value="C:cytosolic small ribosomal subunit"/>
    <property type="evidence" value="ECO:0007669"/>
    <property type="project" value="TreeGrafter"/>
</dbReference>
<dbReference type="GO" id="GO:0003723">
    <property type="term" value="F:RNA binding"/>
    <property type="evidence" value="ECO:0007669"/>
    <property type="project" value="TreeGrafter"/>
</dbReference>
<dbReference type="GO" id="GO:0003735">
    <property type="term" value="F:structural constituent of ribosome"/>
    <property type="evidence" value="ECO:0007669"/>
    <property type="project" value="InterPro"/>
</dbReference>
<dbReference type="GO" id="GO:0006412">
    <property type="term" value="P:translation"/>
    <property type="evidence" value="ECO:0007669"/>
    <property type="project" value="UniProtKB-UniRule"/>
</dbReference>
<dbReference type="FunFam" id="3.30.230.10:FF:000001">
    <property type="entry name" value="30S ribosomal protein S9"/>
    <property type="match status" value="1"/>
</dbReference>
<dbReference type="Gene3D" id="3.30.230.10">
    <property type="match status" value="1"/>
</dbReference>
<dbReference type="HAMAP" id="MF_00532_B">
    <property type="entry name" value="Ribosomal_uS9_B"/>
    <property type="match status" value="1"/>
</dbReference>
<dbReference type="InterPro" id="IPR020568">
    <property type="entry name" value="Ribosomal_Su5_D2-typ_SF"/>
</dbReference>
<dbReference type="InterPro" id="IPR000754">
    <property type="entry name" value="Ribosomal_uS9"/>
</dbReference>
<dbReference type="InterPro" id="IPR023035">
    <property type="entry name" value="Ribosomal_uS9_bac/plastid"/>
</dbReference>
<dbReference type="InterPro" id="IPR020574">
    <property type="entry name" value="Ribosomal_uS9_CS"/>
</dbReference>
<dbReference type="InterPro" id="IPR014721">
    <property type="entry name" value="Ribsml_uS5_D2-typ_fold_subgr"/>
</dbReference>
<dbReference type="NCBIfam" id="NF001099">
    <property type="entry name" value="PRK00132.1"/>
    <property type="match status" value="1"/>
</dbReference>
<dbReference type="PANTHER" id="PTHR21569">
    <property type="entry name" value="RIBOSOMAL PROTEIN S9"/>
    <property type="match status" value="1"/>
</dbReference>
<dbReference type="PANTHER" id="PTHR21569:SF1">
    <property type="entry name" value="SMALL RIBOSOMAL SUBUNIT PROTEIN US9M"/>
    <property type="match status" value="1"/>
</dbReference>
<dbReference type="Pfam" id="PF00380">
    <property type="entry name" value="Ribosomal_S9"/>
    <property type="match status" value="1"/>
</dbReference>
<dbReference type="SUPFAM" id="SSF54211">
    <property type="entry name" value="Ribosomal protein S5 domain 2-like"/>
    <property type="match status" value="1"/>
</dbReference>
<dbReference type="PROSITE" id="PS00360">
    <property type="entry name" value="RIBOSOMAL_S9"/>
    <property type="match status" value="1"/>
</dbReference>
<protein>
    <recommendedName>
        <fullName evidence="1">Small ribosomal subunit protein uS9</fullName>
    </recommendedName>
    <alternativeName>
        <fullName evidence="2">30S ribosomal protein S9</fullName>
    </alternativeName>
</protein>
<proteinExistence type="inferred from homology"/>
<sequence length="130" mass="14457">MIGNWNYGTGRRKTSVARVFIKKGSGKIVVNGKPVDEFFARETGRMIVCQPLELTGHLESFDIKVNVHGGGETGQAGAVRHGITRALIDYDAALKPALSQAGFVTRDAREVERKKVGFRKARRRKQFSKR</sequence>
<name>RS9_BORPA</name>
<comment type="similarity">
    <text evidence="1">Belongs to the universal ribosomal protein uS9 family.</text>
</comment>
<organism>
    <name type="scientific">Bordetella parapertussis (strain 12822 / ATCC BAA-587 / NCTC 13253)</name>
    <dbReference type="NCBI Taxonomy" id="257311"/>
    <lineage>
        <taxon>Bacteria</taxon>
        <taxon>Pseudomonadati</taxon>
        <taxon>Pseudomonadota</taxon>
        <taxon>Betaproteobacteria</taxon>
        <taxon>Burkholderiales</taxon>
        <taxon>Alcaligenaceae</taxon>
        <taxon>Bordetella</taxon>
    </lineage>
</organism>
<evidence type="ECO:0000255" key="1">
    <source>
        <dbReference type="HAMAP-Rule" id="MF_00532"/>
    </source>
</evidence>
<evidence type="ECO:0000305" key="2"/>
<reference key="1">
    <citation type="journal article" date="2003" name="Nat. Genet.">
        <title>Comparative analysis of the genome sequences of Bordetella pertussis, Bordetella parapertussis and Bordetella bronchiseptica.</title>
        <authorList>
            <person name="Parkhill J."/>
            <person name="Sebaihia M."/>
            <person name="Preston A."/>
            <person name="Murphy L.D."/>
            <person name="Thomson N.R."/>
            <person name="Harris D.E."/>
            <person name="Holden M.T.G."/>
            <person name="Churcher C.M."/>
            <person name="Bentley S.D."/>
            <person name="Mungall K.L."/>
            <person name="Cerdeno-Tarraga A.-M."/>
            <person name="Temple L."/>
            <person name="James K.D."/>
            <person name="Harris B."/>
            <person name="Quail M.A."/>
            <person name="Achtman M."/>
            <person name="Atkin R."/>
            <person name="Baker S."/>
            <person name="Basham D."/>
            <person name="Bason N."/>
            <person name="Cherevach I."/>
            <person name="Chillingworth T."/>
            <person name="Collins M."/>
            <person name="Cronin A."/>
            <person name="Davis P."/>
            <person name="Doggett J."/>
            <person name="Feltwell T."/>
            <person name="Goble A."/>
            <person name="Hamlin N."/>
            <person name="Hauser H."/>
            <person name="Holroyd S."/>
            <person name="Jagels K."/>
            <person name="Leather S."/>
            <person name="Moule S."/>
            <person name="Norberczak H."/>
            <person name="O'Neil S."/>
            <person name="Ormond D."/>
            <person name="Price C."/>
            <person name="Rabbinowitsch E."/>
            <person name="Rutter S."/>
            <person name="Sanders M."/>
            <person name="Saunders D."/>
            <person name="Seeger K."/>
            <person name="Sharp S."/>
            <person name="Simmonds M."/>
            <person name="Skelton J."/>
            <person name="Squares R."/>
            <person name="Squares S."/>
            <person name="Stevens K."/>
            <person name="Unwin L."/>
            <person name="Whitehead S."/>
            <person name="Barrell B.G."/>
            <person name="Maskell D.J."/>
        </authorList>
    </citation>
    <scope>NUCLEOTIDE SEQUENCE [LARGE SCALE GENOMIC DNA]</scope>
    <source>
        <strain>12822 / ATCC BAA-587 / NCTC 13253</strain>
    </source>
</reference>
<gene>
    <name evidence="1" type="primary">rpsI</name>
    <name type="ordered locus">BPP3883</name>
</gene>
<keyword id="KW-0687">Ribonucleoprotein</keyword>
<keyword id="KW-0689">Ribosomal protein</keyword>
<feature type="chain" id="PRO_0000111330" description="Small ribosomal subunit protein uS9">
    <location>
        <begin position="1"/>
        <end position="130"/>
    </location>
</feature>
<accession>Q7W3Z2</accession>